<gene>
    <name type="primary">P2OX</name>
</gene>
<keyword id="KW-0903">Direct protein sequencing</keyword>
<keyword id="KW-0274">FAD</keyword>
<keyword id="KW-0285">Flavoprotein</keyword>
<keyword id="KW-0560">Oxidoreductase</keyword>
<keyword id="KW-0574">Periplasm</keyword>
<keyword id="KW-0732">Signal</keyword>
<organism>
    <name type="scientific">Trametes versicolor</name>
    <name type="common">White-rot fungus</name>
    <name type="synonym">Coriolus versicolor</name>
    <dbReference type="NCBI Taxonomy" id="5325"/>
    <lineage>
        <taxon>Eukaryota</taxon>
        <taxon>Fungi</taxon>
        <taxon>Dikarya</taxon>
        <taxon>Basidiomycota</taxon>
        <taxon>Agaricomycotina</taxon>
        <taxon>Agaricomycetes</taxon>
        <taxon>Polyporales</taxon>
        <taxon>Polyporaceae</taxon>
        <taxon>Trametes</taxon>
    </lineage>
</organism>
<protein>
    <recommendedName>
        <fullName>Pyranose 2-oxidase</fullName>
        <shortName>P2Ox</shortName>
        <shortName>POD</shortName>
        <shortName>POx</shortName>
        <shortName>PROD</shortName>
        <shortName>Pyranose oxidase</shortName>
        <ecNumber>1.1.3.10</ecNumber>
    </recommendedName>
    <alternativeName>
        <fullName>FAD-oxidoreductase</fullName>
    </alternativeName>
    <alternativeName>
        <fullName>Glucose 2-oxidase</fullName>
    </alternativeName>
    <alternativeName>
        <fullName>Pyranose:oxygen 2-oxidoreductase</fullName>
    </alternativeName>
</protein>
<reference key="1">
    <citation type="journal article" date="1996" name="J. Biotechnol.">
        <title>Cloning and expression of pyranose oxidase cDNA from Coriolus versicolor in Escherichia coli.</title>
        <authorList>
            <person name="Nishimura I."/>
            <person name="Okada K."/>
            <person name="Koyama Y."/>
        </authorList>
    </citation>
    <scope>NUCLEOTIDE SEQUENCE [MRNA]</scope>
    <scope>PROTEIN SEQUENCE OF 39-63; 92-98; 186-207; 215-225; 378-411; 491-513 AND 611-621</scope>
    <scope>CHARACTERIZATION</scope>
    <scope>TETRAMERIZATION</scope>
    <source>
        <strain>ATCC 62976 / IAM 13013 / NBRC 30340 / FES 1030 / Ps-4a</strain>
        <tissue>Mycelium</tissue>
    </source>
</reference>
<reference key="2">
    <citation type="journal article" date="1984" name="Agric. Biol. Chem.">
        <title>Purification and properties of pyranose oxidase from Coriolus versicolor.</title>
        <authorList>
            <person name="Machida Y."/>
            <person name="Nakanishi T."/>
        </authorList>
        <dbReference type="AGRICOLA" id="IND85055664"/>
    </citation>
    <scope>FAD-BINDING</scope>
</reference>
<reference key="3">
    <citation type="journal article" date="1994" name="Appl. Environ. Microbiol.">
        <title>Pyranose oxidase, a major source of H(2)O(2) during wood degradation by Phanerochaete chrysosporium, Trametes versicolor, and Oudemansiella mucida.</title>
        <authorList>
            <person name="Daniel G."/>
            <person name="Volc J."/>
            <person name="Kubatova E."/>
        </authorList>
    </citation>
    <scope>FUNCTION</scope>
</reference>
<reference key="4">
    <citation type="journal article" date="1999" name="Biotechnol. Lett.">
        <title>Improvement in thermal stability and reactivity of pyranose oxidase from Coriolus versicolor by random mutagenesis.</title>
        <authorList>
            <person name="Masuda-Nishimura I."/>
            <person name="Minamihara T."/>
            <person name="Koyama Y."/>
        </authorList>
    </citation>
    <scope>BIOPHYSICOCHEMICAL PROPERTIES</scope>
    <scope>TETRAMERIZATION</scope>
    <scope>MUTAGENESIS OF GLU-542</scope>
</reference>
<proteinExistence type="evidence at protein level"/>
<evidence type="ECO:0000250" key="1"/>
<evidence type="ECO:0000250" key="2">
    <source>
        <dbReference type="UniProtKB" id="E4QP00"/>
    </source>
</evidence>
<evidence type="ECO:0000269" key="3">
    <source>
    </source>
</evidence>
<evidence type="ECO:0000269" key="4">
    <source>
    </source>
</evidence>
<evidence type="ECO:0000269" key="5">
    <source ref="2"/>
</evidence>
<evidence type="ECO:0000269" key="6">
    <source ref="4"/>
</evidence>
<evidence type="ECO:0000305" key="7"/>
<dbReference type="EC" id="1.1.3.10"/>
<dbReference type="EMBL" id="D73369">
    <property type="protein sequence ID" value="BAA11119.1"/>
    <property type="molecule type" value="mRNA"/>
</dbReference>
<dbReference type="SMR" id="P79076"/>
<dbReference type="CAZy" id="AA3">
    <property type="family name" value="Auxiliary Activities 3"/>
</dbReference>
<dbReference type="GO" id="GO:0042597">
    <property type="term" value="C:periplasmic space"/>
    <property type="evidence" value="ECO:0007669"/>
    <property type="project" value="UniProtKB-SubCell"/>
</dbReference>
<dbReference type="GO" id="GO:0050660">
    <property type="term" value="F:flavin adenine dinucleotide binding"/>
    <property type="evidence" value="ECO:0007669"/>
    <property type="project" value="InterPro"/>
</dbReference>
<dbReference type="GO" id="GO:0050233">
    <property type="term" value="F:pyranose oxidase activity"/>
    <property type="evidence" value="ECO:0007669"/>
    <property type="project" value="UniProtKB-EC"/>
</dbReference>
<dbReference type="Gene3D" id="3.30.1920.50">
    <property type="match status" value="1"/>
</dbReference>
<dbReference type="Gene3D" id="3.50.50.60">
    <property type="entry name" value="FAD/NAD(P)-binding domain"/>
    <property type="match status" value="2"/>
</dbReference>
<dbReference type="InterPro" id="IPR036188">
    <property type="entry name" value="FAD/NAD-bd_sf"/>
</dbReference>
<dbReference type="InterPro" id="IPR007867">
    <property type="entry name" value="GMC_OxRtase_C"/>
</dbReference>
<dbReference type="InterPro" id="IPR012814">
    <property type="entry name" value="P2OX"/>
</dbReference>
<dbReference type="InterPro" id="IPR051473">
    <property type="entry name" value="P2Ox-like"/>
</dbReference>
<dbReference type="NCBIfam" id="TIGR02462">
    <property type="entry name" value="pyranose_ox"/>
    <property type="match status" value="1"/>
</dbReference>
<dbReference type="PANTHER" id="PTHR42784">
    <property type="entry name" value="PYRANOSE 2-OXIDASE"/>
    <property type="match status" value="1"/>
</dbReference>
<dbReference type="PANTHER" id="PTHR42784:SF1">
    <property type="entry name" value="PYRANOSE 2-OXIDASE"/>
    <property type="match status" value="1"/>
</dbReference>
<dbReference type="Pfam" id="PF05199">
    <property type="entry name" value="GMC_oxred_C"/>
    <property type="match status" value="1"/>
</dbReference>
<dbReference type="SUPFAM" id="SSF54373">
    <property type="entry name" value="FAD-linked reductases, C-terminal domain"/>
    <property type="match status" value="1"/>
</dbReference>
<dbReference type="SUPFAM" id="SSF51905">
    <property type="entry name" value="FAD/NAD(P)-binding domain"/>
    <property type="match status" value="1"/>
</dbReference>
<comment type="function">
    <text evidence="3">Catalyzes the oxidation of various aldopyranoses and disaccharides on carbon-2 to the corresponding 2-keto sugars concomitant with the reduction of O(2) to H(2)O(2). Plays an important role in lignin degradation of wood rot fungi by supplying the essential cosubstrate H(2)O(2) for the ligninolytic peroxidases, lignin peroxidase and manganese-dependent peroxidase. The preferred substrate is D-glucose which is converted to 2-dehydro-D-glucose. Also acts on D-xylose, together with D-glucose the major sugars derived from wood, on L-sorbose, D-galactose and 1,5-anhydroglucitol, a diagnostic marker of diabetes mellitus.</text>
</comment>
<comment type="catalytic activity">
    <reaction>
        <text>D-glucose + O2 = 2-dehydro-D-glucose + H2O2</text>
        <dbReference type="Rhea" id="RHEA:10552"/>
        <dbReference type="ChEBI" id="CHEBI:4167"/>
        <dbReference type="ChEBI" id="CHEBI:15379"/>
        <dbReference type="ChEBI" id="CHEBI:16240"/>
        <dbReference type="ChEBI" id="CHEBI:16609"/>
        <dbReference type="EC" id="1.1.3.10"/>
    </reaction>
</comment>
<comment type="cofactor">
    <cofactor evidence="5">
        <name>FAD</name>
        <dbReference type="ChEBI" id="CHEBI:57692"/>
    </cofactor>
    <text evidence="5">Binds 1 FAD covalently per subunit.</text>
</comment>
<comment type="biophysicochemical properties">
    <kinetics>
        <KM evidence="6">1.4 mM for D-glucose</KM>
        <KM evidence="6">35.3 mM for 1,5-anhydro-D-glucitol</KM>
    </kinetics>
    <phDependence>
        <text evidence="6">Optimum pH is about 6.5. Active from pH 5 to 9. Stable from pH 3 to 11.</text>
    </phDependence>
    <temperatureDependence>
        <text evidence="6">Optimum temperature is about 50 degrees Celsius. Active from 30 to 65 degrees Celsius. Thermostable for 30 minutes up to 55 degrees Celsius.</text>
    </temperatureDependence>
</comment>
<comment type="subunit">
    <text>Homotetramer.</text>
</comment>
<comment type="subcellular location">
    <subcellularLocation>
        <location evidence="1">Periplasm</location>
    </subcellularLocation>
    <text evidence="1">Hyphal periplasmic space.</text>
</comment>
<comment type="PTM">
    <text>Not glycosylated.</text>
</comment>
<comment type="similarity">
    <text evidence="7">Belongs to the GMC oxidoreductase family.</text>
</comment>
<accession>P79076</accession>
<sequence length="623" mass="69495">MSTSSSDPFFNFTKSSFRSAAAQKASATSLPPLPGPDKKVPGMDIKYDVVIVGSGPIGCTYARELVEAGYKVAMFDIGEIDSGLKIGAHKKNTVEYQKNIDKFVNVIQGQLMSVSVPVNTLVIDTLSPTSWQASSFFVRNGSNPEQDPLRNLSGQAVTRVVGGMSTHWTCATPRFDREQRPLLVKDDQDADDAEWDRLYTKAESYFKTGTDQFKESIRHNLVLNKLAEEYKGQRDFQQIPLAATRRSPTFVEWSSANTVFDLQNRPNTDAPNERFNLFPAVACERVVRNTSNSEIESLHIHDLISGDRFEIKADVFVLTAGAVHNAQLLVNSGFGQLGRPDPANPPQLLPSLGSYITEQSLVFCQTVMSTELIDSVKSDMIIRGNPGDLGYSVTYTPGAETNKHPDWWNEKVKNHMMQHQEDPLPIPFEDPEPQVTTLFQPSHPWHTQIHRDAFSYGAVQQSIDSRLIVDWRFFGRTEPKEENKLWFSDKITDTYNMPQPTFDFRFPAGRTSKEAEDMMTDMCVMSAKIGGFLPGSLPQFMEPGLVLHLGGTHRMGFDEQEDKCCVNTDSRVFGFKNLFLGGCGNIPTAYGANPTLTAMSLAIKSCEYIKNNFTPSPFTDQAE</sequence>
<name>P2OX_TRAVE</name>
<feature type="signal peptide" evidence="7">
    <location>
        <begin position="1"/>
        <end position="27"/>
    </location>
</feature>
<feature type="propeptide" id="PRO_0000012356" evidence="4">
    <location>
        <begin position="28"/>
        <end position="38"/>
    </location>
</feature>
<feature type="chain" id="PRO_0000012357" description="Pyranose 2-oxidase">
    <location>
        <begin position="39"/>
        <end position="623"/>
    </location>
</feature>
<feature type="active site" description="Proton acceptor" evidence="2">
    <location>
        <position position="548"/>
    </location>
</feature>
<feature type="active site" evidence="1">
    <location>
        <position position="593"/>
    </location>
</feature>
<feature type="binding site" evidence="1">
    <location>
        <position position="448"/>
    </location>
    <ligand>
        <name>substrate</name>
    </ligand>
</feature>
<feature type="binding site" evidence="1">
    <location>
        <position position="450"/>
    </location>
    <ligand>
        <name>substrate</name>
    </ligand>
</feature>
<feature type="modified residue" description="Tele-8alpha-FAD histidine" evidence="1">
    <location>
        <position position="167"/>
    </location>
</feature>
<feature type="mutagenesis site" description="Increases thermostability up to 65 degrees Celsius and enhances pH stability in alkaline solution. Increases the catalytic efficiency 2-fold for D-glucose and 3-fold for 1,5-anhydro-D-glucitol, mainly by lowering the Km values for these two substrates to 0.74 mM and 14.3 mM, respectively." evidence="6">
    <original>E</original>
    <variation>K</variation>
    <location>
        <position position="542"/>
    </location>
</feature>